<organism>
    <name type="scientific">Caenorhabditis elegans</name>
    <dbReference type="NCBI Taxonomy" id="6239"/>
    <lineage>
        <taxon>Eukaryota</taxon>
        <taxon>Metazoa</taxon>
        <taxon>Ecdysozoa</taxon>
        <taxon>Nematoda</taxon>
        <taxon>Chromadorea</taxon>
        <taxon>Rhabditida</taxon>
        <taxon>Rhabditina</taxon>
        <taxon>Rhabditomorpha</taxon>
        <taxon>Rhabditoidea</taxon>
        <taxon>Rhabditidae</taxon>
        <taxon>Peloderinae</taxon>
        <taxon>Caenorhabditis</taxon>
    </lineage>
</organism>
<gene>
    <name type="ORF">ZK669.3</name>
</gene>
<evidence type="ECO:0000255" key="1"/>
<evidence type="ECO:0000269" key="2">
    <source>
    </source>
</evidence>
<evidence type="ECO:0000269" key="3">
    <source>
    </source>
</evidence>
<evidence type="ECO:0000305" key="4"/>
<reference key="1">
    <citation type="journal article" date="1998" name="Science">
        <title>Genome sequence of the nematode C. elegans: a platform for investigating biology.</title>
        <authorList>
            <consortium name="The C. elegans sequencing consortium"/>
        </authorList>
    </citation>
    <scope>NUCLEOTIDE SEQUENCE [LARGE SCALE GENOMIC DNA]</scope>
    <source>
        <strain>Bristol N2</strain>
    </source>
</reference>
<reference key="2">
    <citation type="journal article" date="2003" name="Nat. Biotechnol.">
        <title>Lectin affinity capture, isotope-coded tagging and mass spectrometry to identify N-linked glycoproteins.</title>
        <authorList>
            <person name="Kaji H."/>
            <person name="Saito H."/>
            <person name="Yamauchi Y."/>
            <person name="Shinkawa T."/>
            <person name="Taoka M."/>
            <person name="Hirabayashi J."/>
            <person name="Kasai K."/>
            <person name="Takahashi N."/>
            <person name="Isobe T."/>
        </authorList>
    </citation>
    <scope>GLYCOSYLATION [LARGE SCALE ANALYSIS] AT ASN-185</scope>
    <scope>IDENTIFICATION BY MASS SPECTROMETRY</scope>
    <source>
        <strain>Bristol N2</strain>
    </source>
</reference>
<reference key="3">
    <citation type="journal article" date="2007" name="Mol. Cell. Proteomics">
        <title>Proteomics reveals N-linked glycoprotein diversity in Caenorhabditis elegans and suggests an atypical translocation mechanism for integral membrane proteins.</title>
        <authorList>
            <person name="Kaji H."/>
            <person name="Kamiie J."/>
            <person name="Kawakami H."/>
            <person name="Kido K."/>
            <person name="Yamauchi Y."/>
            <person name="Shinkawa T."/>
            <person name="Taoka M."/>
            <person name="Takahashi N."/>
            <person name="Isobe T."/>
        </authorList>
    </citation>
    <scope>GLYCOSYLATION [LARGE SCALE ANALYSIS] AT ASN-185</scope>
    <scope>IDENTIFICATION BY MASS SPECTROMETRY</scope>
    <source>
        <strain>Bristol N2</strain>
    </source>
</reference>
<protein>
    <recommendedName>
        <fullName>GILT-like protein ZK669.3</fullName>
    </recommendedName>
</protein>
<proteinExistence type="evidence at protein level"/>
<sequence length="218" mass="25223">MRRLNGVFICLILFITKISYAKDKGANGDMVNIVAFGEGRCSDTSYWMKWHWLPMWRMLGSTGRINFDYHPYGIKTTCVDSESADDVVCDCHHGNRECLLNQLQACVIEALPNFEDYMEVVTCIQGKQNISMAAEVCFEGPTKLDRTKMMECAESRHGRKLFSDQENIVAQMAPEMDWAPWILINGTRYKEAEEDLWQFLCDRFIDPRPIHCPKKIVY</sequence>
<dbReference type="EMBL" id="Z37093">
    <property type="protein sequence ID" value="CAA85464.1"/>
    <property type="molecule type" value="Genomic_DNA"/>
</dbReference>
<dbReference type="PIR" id="T27954">
    <property type="entry name" value="T27954"/>
</dbReference>
<dbReference type="RefSeq" id="NP_495669.1">
    <property type="nucleotide sequence ID" value="NM_063268.8"/>
</dbReference>
<dbReference type="SMR" id="Q23570"/>
<dbReference type="FunCoup" id="Q23570">
    <property type="interactions" value="1"/>
</dbReference>
<dbReference type="iPTMnet" id="Q23570"/>
<dbReference type="PaxDb" id="6239-ZK669.3"/>
<dbReference type="PeptideAtlas" id="Q23570"/>
<dbReference type="EnsemblMetazoa" id="ZK669.3.1">
    <property type="protein sequence ID" value="ZK669.3.1"/>
    <property type="gene ID" value="WBGene00014053"/>
</dbReference>
<dbReference type="GeneID" id="191388"/>
<dbReference type="KEGG" id="cel:CELE_ZK669.3"/>
<dbReference type="UCSC" id="ZK669.3">
    <property type="organism name" value="c. elegans"/>
</dbReference>
<dbReference type="AGR" id="WB:WBGene00014053"/>
<dbReference type="CTD" id="191388"/>
<dbReference type="WormBase" id="ZK669.3">
    <property type="protein sequence ID" value="CE01114"/>
    <property type="gene ID" value="WBGene00014053"/>
</dbReference>
<dbReference type="eggNOG" id="KOG3160">
    <property type="taxonomic scope" value="Eukaryota"/>
</dbReference>
<dbReference type="GeneTree" id="ENSGT00970000196381"/>
<dbReference type="HOGENOM" id="CLU_066886_2_3_1"/>
<dbReference type="InParanoid" id="Q23570"/>
<dbReference type="OMA" id="GRINFEY"/>
<dbReference type="OrthoDB" id="958254at2759"/>
<dbReference type="PhylomeDB" id="Q23570"/>
<dbReference type="PRO" id="PR:Q23570"/>
<dbReference type="Proteomes" id="UP000001940">
    <property type="component" value="Chromosome II"/>
</dbReference>
<dbReference type="Bgee" id="WBGene00014053">
    <property type="expression patterns" value="Expressed in adult organism and 3 other cell types or tissues"/>
</dbReference>
<dbReference type="GO" id="GO:0005576">
    <property type="term" value="C:extracellular region"/>
    <property type="evidence" value="ECO:0007669"/>
    <property type="project" value="UniProtKB-SubCell"/>
</dbReference>
<dbReference type="GO" id="GO:0016491">
    <property type="term" value="F:oxidoreductase activity"/>
    <property type="evidence" value="ECO:0000318"/>
    <property type="project" value="GO_Central"/>
</dbReference>
<dbReference type="GO" id="GO:0016671">
    <property type="term" value="F:oxidoreductase activity, acting on a sulfur group of donors, disulfide as acceptor"/>
    <property type="evidence" value="ECO:0007669"/>
    <property type="project" value="InterPro"/>
</dbReference>
<dbReference type="InterPro" id="IPR004911">
    <property type="entry name" value="Interferon-induced_GILT"/>
</dbReference>
<dbReference type="PANTHER" id="PTHR13234">
    <property type="entry name" value="GAMMA-INTERFERON INDUCIBLE LYSOSOMAL THIOL REDUCTASE GILT"/>
    <property type="match status" value="1"/>
</dbReference>
<dbReference type="PANTHER" id="PTHR13234:SF24">
    <property type="entry name" value="GILT-LIKE PROTEIN ZK669.3"/>
    <property type="match status" value="1"/>
</dbReference>
<dbReference type="Pfam" id="PF03227">
    <property type="entry name" value="GILT"/>
    <property type="match status" value="1"/>
</dbReference>
<accession>Q23570</accession>
<name>YO30_CAEEL</name>
<feature type="signal peptide" evidence="1">
    <location>
        <begin position="1"/>
        <end position="21"/>
    </location>
</feature>
<feature type="chain" id="PRO_0000248560" description="GILT-like protein ZK669.3">
    <location>
        <begin position="22"/>
        <end position="218"/>
    </location>
</feature>
<feature type="glycosylation site" description="N-linked (GlcNAc...) asparagine" evidence="1">
    <location>
        <position position="129"/>
    </location>
</feature>
<feature type="glycosylation site" description="N-linked (GlcNAc...) asparagine" evidence="2 3">
    <location>
        <position position="185"/>
    </location>
</feature>
<keyword id="KW-0325">Glycoprotein</keyword>
<keyword id="KW-1185">Reference proteome</keyword>
<keyword id="KW-0964">Secreted</keyword>
<keyword id="KW-0732">Signal</keyword>
<comment type="subcellular location">
    <subcellularLocation>
        <location evidence="4">Secreted</location>
    </subcellularLocation>
</comment>
<comment type="similarity">
    <text evidence="4">Belongs to the GILT family.</text>
</comment>